<keyword id="KW-0150">Chloroplast</keyword>
<keyword id="KW-0934">Plastid</keyword>
<keyword id="KW-1185">Reference proteome</keyword>
<keyword id="KW-0687">Ribonucleoprotein</keyword>
<keyword id="KW-0689">Ribosomal protein</keyword>
<keyword id="KW-0694">RNA-binding</keyword>
<keyword id="KW-0699">rRNA-binding</keyword>
<feature type="chain" id="PRO_0000355862" description="Large ribosomal subunit protein uL14c">
    <location>
        <begin position="1"/>
        <end position="123"/>
    </location>
</feature>
<protein>
    <recommendedName>
        <fullName evidence="1">Large ribosomal subunit protein uL14c</fullName>
    </recommendedName>
    <alternativeName>
        <fullName evidence="2">50S ribosomal protein L14, chloroplastic</fullName>
    </alternativeName>
</protein>
<proteinExistence type="inferred from homology"/>
<reference key="1">
    <citation type="journal article" date="2008" name="BMC Res. Notes">
        <title>The complete chloroplast genome sequence of Brachypodium distachyon: sequence comparison and phylogenetic analysis of eight grass plastomes.</title>
        <authorList>
            <person name="Bortiri E."/>
            <person name="Coleman-Derr D."/>
            <person name="Lazo G.R."/>
            <person name="Anderson O.D."/>
            <person name="Gu Y.Q."/>
        </authorList>
    </citation>
    <scope>NUCLEOTIDE SEQUENCE [LARGE SCALE GENOMIC DNA]</scope>
    <source>
        <strain>cv. Bd21</strain>
    </source>
</reference>
<sequence>MIQPQTLLNVADNSGARKLMCIRVIGTAGNQRYARIGDVIVAVIKDAVPQMPLERSEVIRAVIVRTCKEFKCEDGIIIRYDDNAAVIIDQKGNPKGTRVFGAITEELRELNFTKIVSLAPEVL</sequence>
<comment type="function">
    <text evidence="1">Binds to 23S rRNA.</text>
</comment>
<comment type="subunit">
    <text evidence="1">Part of the 50S ribosomal subunit.</text>
</comment>
<comment type="subcellular location">
    <subcellularLocation>
        <location>Plastid</location>
        <location>Chloroplast</location>
    </subcellularLocation>
</comment>
<comment type="similarity">
    <text evidence="1">Belongs to the universal ribosomal protein uL14 family.</text>
</comment>
<organism>
    <name type="scientific">Brachypodium distachyon</name>
    <name type="common">Purple false brome</name>
    <name type="synonym">Trachynia distachya</name>
    <dbReference type="NCBI Taxonomy" id="15368"/>
    <lineage>
        <taxon>Eukaryota</taxon>
        <taxon>Viridiplantae</taxon>
        <taxon>Streptophyta</taxon>
        <taxon>Embryophyta</taxon>
        <taxon>Tracheophyta</taxon>
        <taxon>Spermatophyta</taxon>
        <taxon>Magnoliopsida</taxon>
        <taxon>Liliopsida</taxon>
        <taxon>Poales</taxon>
        <taxon>Poaceae</taxon>
        <taxon>BOP clade</taxon>
        <taxon>Pooideae</taxon>
        <taxon>Stipodae</taxon>
        <taxon>Brachypodieae</taxon>
        <taxon>Brachypodium</taxon>
    </lineage>
</organism>
<name>RK14_BRADI</name>
<accession>B3TN86</accession>
<gene>
    <name evidence="1" type="primary">rpl14</name>
</gene>
<dbReference type="EMBL" id="EU325680">
    <property type="protein sequence ID" value="ACF08674.1"/>
    <property type="molecule type" value="Genomic_DNA"/>
</dbReference>
<dbReference type="RefSeq" id="YP_002000522.1">
    <property type="nucleotide sequence ID" value="NC_011032.1"/>
</dbReference>
<dbReference type="SMR" id="B3TN86"/>
<dbReference type="FunCoup" id="B3TN86">
    <property type="interactions" value="333"/>
</dbReference>
<dbReference type="STRING" id="15368.B3TN86"/>
<dbReference type="EnsemblPlants" id="KQJ96827">
    <property type="protein sequence ID" value="KQJ96827"/>
    <property type="gene ID" value="BRADI_3g27300v3"/>
</dbReference>
<dbReference type="EnsemblPlants" id="KQK18197">
    <property type="protein sequence ID" value="KQK18197"/>
    <property type="gene ID" value="BRADI_1g05772v3"/>
</dbReference>
<dbReference type="GeneID" id="6439838"/>
<dbReference type="Gramene" id="KQJ96827">
    <property type="protein sequence ID" value="KQJ96827"/>
    <property type="gene ID" value="BRADI_3g27300v3"/>
</dbReference>
<dbReference type="Gramene" id="KQK18197">
    <property type="protein sequence ID" value="KQK18197"/>
    <property type="gene ID" value="BRADI_1g05772v3"/>
</dbReference>
<dbReference type="KEGG" id="bdi:6439838"/>
<dbReference type="eggNOG" id="KOG0901">
    <property type="taxonomic scope" value="Eukaryota"/>
</dbReference>
<dbReference type="HOGENOM" id="CLU_095071_2_1_1"/>
<dbReference type="InParanoid" id="B3TN86"/>
<dbReference type="OMA" id="HINSMII"/>
<dbReference type="OrthoDB" id="733561at2759"/>
<dbReference type="Proteomes" id="UP000008810">
    <property type="component" value="Unplaced"/>
</dbReference>
<dbReference type="GO" id="GO:0009507">
    <property type="term" value="C:chloroplast"/>
    <property type="evidence" value="ECO:0007669"/>
    <property type="project" value="UniProtKB-SubCell"/>
</dbReference>
<dbReference type="GO" id="GO:0022625">
    <property type="term" value="C:cytosolic large ribosomal subunit"/>
    <property type="evidence" value="ECO:0000318"/>
    <property type="project" value="GO_Central"/>
</dbReference>
<dbReference type="GO" id="GO:0070180">
    <property type="term" value="F:large ribosomal subunit rRNA binding"/>
    <property type="evidence" value="ECO:0000318"/>
    <property type="project" value="GO_Central"/>
</dbReference>
<dbReference type="GO" id="GO:0003735">
    <property type="term" value="F:structural constituent of ribosome"/>
    <property type="evidence" value="ECO:0000318"/>
    <property type="project" value="GO_Central"/>
</dbReference>
<dbReference type="GO" id="GO:0006412">
    <property type="term" value="P:translation"/>
    <property type="evidence" value="ECO:0007669"/>
    <property type="project" value="UniProtKB-UniRule"/>
</dbReference>
<dbReference type="CDD" id="cd00337">
    <property type="entry name" value="Ribosomal_uL14"/>
    <property type="match status" value="1"/>
</dbReference>
<dbReference type="FunFam" id="2.40.150.20:FF:000002">
    <property type="entry name" value="50S ribosomal protein L14, chloroplastic"/>
    <property type="match status" value="1"/>
</dbReference>
<dbReference type="Gene3D" id="2.40.150.20">
    <property type="entry name" value="Ribosomal protein L14"/>
    <property type="match status" value="1"/>
</dbReference>
<dbReference type="HAMAP" id="MF_01367">
    <property type="entry name" value="Ribosomal_uL14"/>
    <property type="match status" value="1"/>
</dbReference>
<dbReference type="InterPro" id="IPR000218">
    <property type="entry name" value="Ribosomal_uL14"/>
</dbReference>
<dbReference type="InterPro" id="IPR005745">
    <property type="entry name" value="Ribosomal_uL14_bac-type"/>
</dbReference>
<dbReference type="InterPro" id="IPR019972">
    <property type="entry name" value="Ribosomal_uL14_CS"/>
</dbReference>
<dbReference type="InterPro" id="IPR036853">
    <property type="entry name" value="Ribosomal_uL14_sf"/>
</dbReference>
<dbReference type="NCBIfam" id="TIGR01067">
    <property type="entry name" value="rplN_bact"/>
    <property type="match status" value="1"/>
</dbReference>
<dbReference type="PANTHER" id="PTHR11761">
    <property type="entry name" value="50S/60S RIBOSOMAL PROTEIN L14/L23"/>
    <property type="match status" value="1"/>
</dbReference>
<dbReference type="PANTHER" id="PTHR11761:SF3">
    <property type="entry name" value="LARGE RIBOSOMAL SUBUNIT PROTEIN UL14M"/>
    <property type="match status" value="1"/>
</dbReference>
<dbReference type="Pfam" id="PF00238">
    <property type="entry name" value="Ribosomal_L14"/>
    <property type="match status" value="1"/>
</dbReference>
<dbReference type="SMART" id="SM01374">
    <property type="entry name" value="Ribosomal_L14"/>
    <property type="match status" value="1"/>
</dbReference>
<dbReference type="SUPFAM" id="SSF50193">
    <property type="entry name" value="Ribosomal protein L14"/>
    <property type="match status" value="1"/>
</dbReference>
<dbReference type="PROSITE" id="PS00049">
    <property type="entry name" value="RIBOSOMAL_L14"/>
    <property type="match status" value="1"/>
</dbReference>
<geneLocation type="chloroplast"/>
<evidence type="ECO:0000255" key="1">
    <source>
        <dbReference type="HAMAP-Rule" id="MF_01367"/>
    </source>
</evidence>
<evidence type="ECO:0000305" key="2"/>